<sequence>MNLTINALTRNYQGKGANRRLRRNNKIPAIVYGTGKPPSKITLDIFEITHLLKNEETYTSVLNLIVNKNKEAVIIKNLQRHPAKNSITHIDFLRINLNQSIITSIPIQFNGEEDNKAMRLGAVLNQFMTAIEISCLPTNLPHSINVDISHLTIGEHINLTDINIPKGIVITALTHGDIETHNQSIAIIQEPRKMAEIEENILVKAEDSKNKITKDNETNKDKSNL</sequence>
<organism>
    <name type="scientific">Vesicomyosocius okutanii subsp. Calyptogena okutanii (strain HA)</name>
    <dbReference type="NCBI Taxonomy" id="412965"/>
    <lineage>
        <taxon>Bacteria</taxon>
        <taxon>Pseudomonadati</taxon>
        <taxon>Pseudomonadota</taxon>
        <taxon>Gammaproteobacteria</taxon>
        <taxon>Candidatus Pseudothioglobaceae</taxon>
        <taxon>Candidatus Vesicomyosocius</taxon>
    </lineage>
</organism>
<feature type="chain" id="PRO_1000052945" description="Large ribosomal subunit protein bL25">
    <location>
        <begin position="1"/>
        <end position="225"/>
    </location>
</feature>
<feature type="region of interest" description="Disordered" evidence="2">
    <location>
        <begin position="206"/>
        <end position="225"/>
    </location>
</feature>
<proteinExistence type="inferred from homology"/>
<dbReference type="EMBL" id="AP009247">
    <property type="protein sequence ID" value="BAF62065.1"/>
    <property type="molecule type" value="Genomic_DNA"/>
</dbReference>
<dbReference type="RefSeq" id="WP_011930334.1">
    <property type="nucleotide sequence ID" value="NC_009465.1"/>
</dbReference>
<dbReference type="SMR" id="A5CVE7"/>
<dbReference type="STRING" id="412965.COSY_0966"/>
<dbReference type="KEGG" id="vok:COSY_0966"/>
<dbReference type="eggNOG" id="COG1825">
    <property type="taxonomic scope" value="Bacteria"/>
</dbReference>
<dbReference type="HOGENOM" id="CLU_075939_0_1_6"/>
<dbReference type="OrthoDB" id="9806411at2"/>
<dbReference type="Proteomes" id="UP000000247">
    <property type="component" value="Chromosome"/>
</dbReference>
<dbReference type="GO" id="GO:0022625">
    <property type="term" value="C:cytosolic large ribosomal subunit"/>
    <property type="evidence" value="ECO:0007669"/>
    <property type="project" value="TreeGrafter"/>
</dbReference>
<dbReference type="GO" id="GO:0008097">
    <property type="term" value="F:5S rRNA binding"/>
    <property type="evidence" value="ECO:0007669"/>
    <property type="project" value="InterPro"/>
</dbReference>
<dbReference type="GO" id="GO:0003735">
    <property type="term" value="F:structural constituent of ribosome"/>
    <property type="evidence" value="ECO:0007669"/>
    <property type="project" value="InterPro"/>
</dbReference>
<dbReference type="GO" id="GO:0006412">
    <property type="term" value="P:translation"/>
    <property type="evidence" value="ECO:0007669"/>
    <property type="project" value="UniProtKB-UniRule"/>
</dbReference>
<dbReference type="CDD" id="cd00495">
    <property type="entry name" value="Ribosomal_L25_TL5_CTC"/>
    <property type="match status" value="1"/>
</dbReference>
<dbReference type="Gene3D" id="2.170.120.20">
    <property type="entry name" value="Ribosomal protein L25, beta domain"/>
    <property type="match status" value="1"/>
</dbReference>
<dbReference type="Gene3D" id="2.40.240.10">
    <property type="entry name" value="Ribosomal Protein L25, Chain P"/>
    <property type="match status" value="1"/>
</dbReference>
<dbReference type="HAMAP" id="MF_01336">
    <property type="entry name" value="Ribosomal_bL25"/>
    <property type="match status" value="1"/>
</dbReference>
<dbReference type="HAMAP" id="MF_01334">
    <property type="entry name" value="Ribosomal_bL25_CTC"/>
    <property type="match status" value="1"/>
</dbReference>
<dbReference type="InterPro" id="IPR020056">
    <property type="entry name" value="Rbsml_bL25/Gln-tRNA_synth_N"/>
</dbReference>
<dbReference type="InterPro" id="IPR011035">
    <property type="entry name" value="Ribosomal_bL25/Gln-tRNA_synth"/>
</dbReference>
<dbReference type="InterPro" id="IPR020057">
    <property type="entry name" value="Ribosomal_bL25_b-dom"/>
</dbReference>
<dbReference type="InterPro" id="IPR037121">
    <property type="entry name" value="Ribosomal_bL25_C"/>
</dbReference>
<dbReference type="InterPro" id="IPR001021">
    <property type="entry name" value="Ribosomal_bL25_long"/>
</dbReference>
<dbReference type="InterPro" id="IPR020055">
    <property type="entry name" value="Ribosomal_bL25_short"/>
</dbReference>
<dbReference type="InterPro" id="IPR029751">
    <property type="entry name" value="Ribosomal_L25_dom"/>
</dbReference>
<dbReference type="InterPro" id="IPR020930">
    <property type="entry name" value="Ribosomal_uL5_bac-type"/>
</dbReference>
<dbReference type="NCBIfam" id="TIGR00731">
    <property type="entry name" value="bL25_bact_ctc"/>
    <property type="match status" value="1"/>
</dbReference>
<dbReference type="NCBIfam" id="NF004130">
    <property type="entry name" value="PRK05618.1-5"/>
    <property type="match status" value="1"/>
</dbReference>
<dbReference type="NCBIfam" id="NF004612">
    <property type="entry name" value="PRK05943.1"/>
    <property type="match status" value="1"/>
</dbReference>
<dbReference type="PANTHER" id="PTHR33284">
    <property type="entry name" value="RIBOSOMAL PROTEIN L25/GLN-TRNA SYNTHETASE, ANTI-CODON-BINDING DOMAIN-CONTAINING PROTEIN"/>
    <property type="match status" value="1"/>
</dbReference>
<dbReference type="PANTHER" id="PTHR33284:SF1">
    <property type="entry name" value="RIBOSOMAL PROTEIN L25_GLN-TRNA SYNTHETASE, ANTI-CODON-BINDING DOMAIN-CONTAINING PROTEIN"/>
    <property type="match status" value="1"/>
</dbReference>
<dbReference type="Pfam" id="PF01386">
    <property type="entry name" value="Ribosomal_L25p"/>
    <property type="match status" value="1"/>
</dbReference>
<dbReference type="Pfam" id="PF14693">
    <property type="entry name" value="Ribosomal_TL5_C"/>
    <property type="match status" value="1"/>
</dbReference>
<dbReference type="SUPFAM" id="SSF50715">
    <property type="entry name" value="Ribosomal protein L25-like"/>
    <property type="match status" value="1"/>
</dbReference>
<name>RL25_VESOH</name>
<gene>
    <name evidence="1" type="primary">rplY</name>
    <name evidence="1" type="synonym">ctc</name>
    <name type="ordered locus">COSY_0966</name>
</gene>
<keyword id="KW-1185">Reference proteome</keyword>
<keyword id="KW-0687">Ribonucleoprotein</keyword>
<keyword id="KW-0689">Ribosomal protein</keyword>
<keyword id="KW-0694">RNA-binding</keyword>
<keyword id="KW-0699">rRNA-binding</keyword>
<protein>
    <recommendedName>
        <fullName evidence="1">Large ribosomal subunit protein bL25</fullName>
    </recommendedName>
    <alternativeName>
        <fullName evidence="3">50S ribosomal protein L25</fullName>
    </alternativeName>
    <alternativeName>
        <fullName evidence="1">General stress protein CTC</fullName>
    </alternativeName>
</protein>
<reference key="1">
    <citation type="journal article" date="2007" name="Curr. Biol.">
        <title>Reduced genome of the thioautotrophic intracellular symbiont in a deep-sea clam, Calyptogena okutanii.</title>
        <authorList>
            <person name="Kuwahara H."/>
            <person name="Yoshida T."/>
            <person name="Takaki Y."/>
            <person name="Shimamura S."/>
            <person name="Nishi S."/>
            <person name="Harada M."/>
            <person name="Matsuyama K."/>
            <person name="Takishita K."/>
            <person name="Kawato M."/>
            <person name="Uematsu K."/>
            <person name="Fujiwara Y."/>
            <person name="Sato T."/>
            <person name="Kato C."/>
            <person name="Kitagawa M."/>
            <person name="Kato I."/>
            <person name="Maruyama T."/>
        </authorList>
    </citation>
    <scope>NUCLEOTIDE SEQUENCE [LARGE SCALE GENOMIC DNA]</scope>
    <source>
        <strain>HA</strain>
    </source>
</reference>
<accession>A5CVE7</accession>
<comment type="function">
    <text evidence="1">This is one of the proteins that binds to the 5S RNA in the ribosome where it forms part of the central protuberance.</text>
</comment>
<comment type="subunit">
    <text evidence="1">Part of the 50S ribosomal subunit; part of the 5S rRNA/L5/L18/L25 subcomplex. Contacts the 5S rRNA. Binds to the 5S rRNA independently of L5 and L18.</text>
</comment>
<comment type="similarity">
    <text evidence="1">Belongs to the bacterial ribosomal protein bL25 family. CTC subfamily.</text>
</comment>
<evidence type="ECO:0000255" key="1">
    <source>
        <dbReference type="HAMAP-Rule" id="MF_01334"/>
    </source>
</evidence>
<evidence type="ECO:0000256" key="2">
    <source>
        <dbReference type="SAM" id="MobiDB-lite"/>
    </source>
</evidence>
<evidence type="ECO:0000305" key="3"/>